<reference key="1">
    <citation type="journal article" date="1995" name="DNA Seq.">
        <title>Sequence of a transposon identified as Tn1000 (gamma delta).</title>
        <authorList>
            <person name="Broom J.E."/>
            <person name="Hill D.F."/>
            <person name="Hughes G."/>
            <person name="Jones W.A."/>
            <person name="McNaughton J.C."/>
            <person name="Stockwell P.A."/>
            <person name="Petersen G.B."/>
        </authorList>
    </citation>
    <scope>NUCLEOTIDE SEQUENCE [GENOMIC DNA]</scope>
</reference>
<reference key="2">
    <citation type="journal article" date="1994" name="Jpn. J. Genet.">
        <title>Identification of the region that determines the specificity of binding of the transposases encoded by Tn3 and gamma delta to the terminal inverted repeat sequences.</title>
        <authorList>
            <person name="Maekawa T."/>
            <person name="Ohtsubo E."/>
        </authorList>
    </citation>
    <scope>NUCLEOTIDE SEQUENCE [GENOMIC DNA]</scope>
</reference>
<reference key="3">
    <citation type="submission" date="2000-04" db="EMBL/GenBank/DDBJ databases">
        <title>Complete nucleotide sequence of the F plasmid: its implications for organization and diversification of plasmid genomes.</title>
        <authorList>
            <person name="Shimizu H."/>
            <person name="Saitoh Y."/>
            <person name="Suda Y."/>
            <person name="Uehara K."/>
            <person name="Sampei G."/>
            <person name="Mizobuchi K."/>
        </authorList>
    </citation>
    <scope>NUCLEOTIDE SEQUENCE [LARGE SCALE GENOMIC DNA]</scope>
    <source>
        <strain>K12 / CR63</strain>
    </source>
</reference>
<feature type="chain" id="PRO_0000068444" description="Putative transposon gamma-delta 80.3 kDa protein">
    <location>
        <begin position="1"/>
        <end position="698"/>
    </location>
</feature>
<gene>
    <name type="primary">tnpX</name>
    <name type="ordered locus">ECOK12F008</name>
</gene>
<name>TNPX_ECOLI</name>
<keyword id="KW-0614">Plasmid</keyword>
<keyword id="KW-0814">Transposable element</keyword>
<organism>
    <name type="scientific">Escherichia coli (strain K12)</name>
    <dbReference type="NCBI Taxonomy" id="83333"/>
    <lineage>
        <taxon>Bacteria</taxon>
        <taxon>Pseudomonadati</taxon>
        <taxon>Pseudomonadota</taxon>
        <taxon>Gammaproteobacteria</taxon>
        <taxon>Enterobacterales</taxon>
        <taxon>Enterobacteriaceae</taxon>
        <taxon>Escherichia</taxon>
    </lineage>
</organism>
<accession>Q00042</accession>
<dbReference type="EMBL" id="X60200">
    <property type="protein sequence ID" value="CAA42758.1"/>
    <property type="molecule type" value="Genomic_DNA"/>
</dbReference>
<dbReference type="EMBL" id="D16449">
    <property type="protein sequence ID" value="BAA03916.1"/>
    <property type="molecule type" value="Genomic_DNA"/>
</dbReference>
<dbReference type="EMBL" id="AP001918">
    <property type="protein sequence ID" value="BAA97878.1"/>
    <property type="molecule type" value="Genomic_DNA"/>
</dbReference>
<dbReference type="PIR" id="I60218">
    <property type="entry name" value="I60218"/>
</dbReference>
<dbReference type="RefSeq" id="NP_061387.1">
    <property type="nucleotide sequence ID" value="NC_002483.1"/>
</dbReference>
<dbReference type="RefSeq" id="WP_000422420.1">
    <property type="nucleotide sequence ID" value="NZ_JACEFS010000062.1"/>
</dbReference>
<dbReference type="KEGG" id="ecoc:C3026_24140"/>
<dbReference type="PATRIC" id="fig|83333.107.peg.595"/>
<dbReference type="OrthoDB" id="100386at2"/>
<dbReference type="InterPro" id="IPR027417">
    <property type="entry name" value="P-loop_NTPase"/>
</dbReference>
<dbReference type="NCBIfam" id="NF047389">
    <property type="entry name" value="ATPase_Sll1717"/>
    <property type="match status" value="1"/>
</dbReference>
<dbReference type="SUPFAM" id="SSF52540">
    <property type="entry name" value="P-loop containing nucleoside triphosphate hydrolases"/>
    <property type="match status" value="1"/>
</dbReference>
<proteinExistence type="predicted"/>
<geneLocation type="plasmid">
    <name>F</name>
</geneLocation>
<sequence>MELNITSKSNPFGDTTAENDKKMLSNAFIETADFRTLIETDDRTIVVGRRGTGKSALFIQLNEHWKKDKKILILSFSPDDSQIIGFRSMLKPFTGSFNLARAATRLLWRYAMLMEIASYISSHYKLSSQISSETLLNEHLKKWNSAQGDILRKCRLVAKEYLDENNPEESIGDLQFNLNISEIENNIVSLLERSDRKVVILMDKLDEAYEPDNIGIGIIAGLAYASIELNQKAKCIRPIIFLRDNIFRSLSKEDPDYSRNIEGQVIRLHWDWAQLLMLSAKRMKVAFKLDIEKDQRVWDRCTADDLKGRNGFKRCLQFTLYRPRDLLSLLNEAFFSAFRENRETIINTDLEYAAKSISMARLEDLWKEYQKIFPSIQVITSAFRSIEPELTVYTCLKKIEASFELIEENGDPKITSEIQLLKASGILQSLYSVGFVGIRDKNTSSYSFCHDGRTPDKGFESNEKLLIHPCYWLGLNLNRNALAPEEAEEINDEYDINIISDNSAIRNKTIGQITTHLDQIPIGNEGATEFEQWCLDALRIVFASHLTDIKSHPNGNAVQRRDIIGTNGGKSDFWKRVLEDYKTRQVVFDAKNFEELGPSEYRQLQSYLTGPYGKLGFIINRDESEVLKSGKDLDWTKEMYQSHNSLIIKLPAKYISKLLQKLRNPEKHDAIDRQMGKLLTLYETSYMAIKSTQKKRRK</sequence>
<protein>
    <recommendedName>
        <fullName>Putative transposon gamma-delta 80.3 kDa protein</fullName>
    </recommendedName>
    <alternativeName>
        <fullName>Transposon Tn1000 protein TnpX</fullName>
    </alternativeName>
</protein>